<proteinExistence type="evidence at transcript level"/>
<reference key="1">
    <citation type="submission" date="1995-05" db="EMBL/GenBank/DDBJ databases">
        <authorList>
            <person name="Estep P."/>
            <person name="O'Keeffe T."/>
            <person name="Robison K."/>
            <person name="Church G.M."/>
        </authorList>
    </citation>
    <scope>NUCLEOTIDE SEQUENCE [GENOMIC DNA]</scope>
    <source>
        <strain>K12 / EMG2</strain>
    </source>
</reference>
<reference key="2">
    <citation type="journal article" date="1996" name="DNA Res.">
        <title>A 460-kb DNA sequence of the Escherichia coli K-12 genome corresponding to the 40.1-50.0 min region on the linkage map.</title>
        <authorList>
            <person name="Itoh T."/>
            <person name="Aiba H."/>
            <person name="Baba T."/>
            <person name="Fujita K."/>
            <person name="Hayashi K."/>
            <person name="Inada T."/>
            <person name="Isono K."/>
            <person name="Kasai H."/>
            <person name="Kimura S."/>
            <person name="Kitakawa M."/>
            <person name="Kitagawa M."/>
            <person name="Makino K."/>
            <person name="Miki T."/>
            <person name="Mizobuchi K."/>
            <person name="Mori H."/>
            <person name="Mori T."/>
            <person name="Motomura K."/>
            <person name="Nakade S."/>
            <person name="Nakamura Y."/>
            <person name="Nashimoto H."/>
            <person name="Nishio Y."/>
            <person name="Oshima T."/>
            <person name="Saito N."/>
            <person name="Sampei G."/>
            <person name="Seki Y."/>
            <person name="Sivasundaram S."/>
            <person name="Tagami H."/>
            <person name="Takeda J."/>
            <person name="Takemoto K."/>
            <person name="Wada C."/>
            <person name="Yamamoto Y."/>
            <person name="Horiuchi T."/>
        </authorList>
    </citation>
    <scope>NUCLEOTIDE SEQUENCE [LARGE SCALE GENOMIC DNA]</scope>
    <source>
        <strain>K12 / W3110 / ATCC 27325 / DSM 5911</strain>
    </source>
</reference>
<reference key="3">
    <citation type="journal article" date="1997" name="Science">
        <title>The complete genome sequence of Escherichia coli K-12.</title>
        <authorList>
            <person name="Blattner F.R."/>
            <person name="Plunkett G. III"/>
            <person name="Bloch C.A."/>
            <person name="Perna N.T."/>
            <person name="Burland V."/>
            <person name="Riley M."/>
            <person name="Collado-Vides J."/>
            <person name="Glasner J.D."/>
            <person name="Rode C.K."/>
            <person name="Mayhew G.F."/>
            <person name="Gregor J."/>
            <person name="Davis N.W."/>
            <person name="Kirkpatrick H.A."/>
            <person name="Goeden M.A."/>
            <person name="Rose D.J."/>
            <person name="Mau B."/>
            <person name="Shao Y."/>
        </authorList>
    </citation>
    <scope>NUCLEOTIDE SEQUENCE [LARGE SCALE GENOMIC DNA]</scope>
    <source>
        <strain>K12 / MG1655 / ATCC 47076</strain>
    </source>
</reference>
<reference key="4">
    <citation type="journal article" date="2006" name="Mol. Syst. Biol.">
        <title>Highly accurate genome sequences of Escherichia coli K-12 strains MG1655 and W3110.</title>
        <authorList>
            <person name="Hayashi K."/>
            <person name="Morooka N."/>
            <person name="Yamamoto Y."/>
            <person name="Fujita K."/>
            <person name="Isono K."/>
            <person name="Choi S."/>
            <person name="Ohtsubo E."/>
            <person name="Baba T."/>
            <person name="Wanner B.L."/>
            <person name="Mori H."/>
            <person name="Horiuchi T."/>
        </authorList>
    </citation>
    <scope>NUCLEOTIDE SEQUENCE [LARGE SCALE GENOMIC DNA]</scope>
    <source>
        <strain>K12 / W3110 / ATCC 27325 / DSM 5911</strain>
    </source>
</reference>
<reference key="5">
    <citation type="journal article" date="2002" name="Mol. Microbiol.">
        <title>The universal stress protein paralogues of Escherichia coli are co-ordinately regulated and co-operate in the defence against DNA damage.</title>
        <authorList>
            <person name="Gustavsson N."/>
            <person name="Diez A."/>
            <person name="Nystroem T."/>
        </authorList>
    </citation>
    <scope>FUNCTION</scope>
    <scope>GENE NAME</scope>
    <scope>TRANSCRIPTIONAL REGULATION</scope>
    <source>
        <strain>K12 / MC4100 / ATCC 35695 / DSM 6574</strain>
    </source>
</reference>
<evidence type="ECO:0000250" key="1"/>
<evidence type="ECO:0000269" key="2">
    <source>
    </source>
</evidence>
<evidence type="ECO:0000305" key="3"/>
<dbReference type="EMBL" id="U27211">
    <property type="protein sequence ID" value="AAA68603.1"/>
    <property type="molecule type" value="Genomic_DNA"/>
</dbReference>
<dbReference type="EMBL" id="U00096">
    <property type="protein sequence ID" value="AAC74965.1"/>
    <property type="molecule type" value="Genomic_DNA"/>
</dbReference>
<dbReference type="EMBL" id="AP009048">
    <property type="protein sequence ID" value="BAA15716.1"/>
    <property type="molecule type" value="Genomic_DNA"/>
</dbReference>
<dbReference type="PIR" id="G64952">
    <property type="entry name" value="G64952"/>
</dbReference>
<dbReference type="RefSeq" id="NP_416409.1">
    <property type="nucleotide sequence ID" value="NC_000913.3"/>
</dbReference>
<dbReference type="RefSeq" id="WP_000122416.1">
    <property type="nucleotide sequence ID" value="NZ_LN832404.1"/>
</dbReference>
<dbReference type="SMR" id="P46888"/>
<dbReference type="BioGRID" id="4259472">
    <property type="interactions" value="17"/>
</dbReference>
<dbReference type="BioGRID" id="850761">
    <property type="interactions" value="6"/>
</dbReference>
<dbReference type="FunCoup" id="P46888">
    <property type="interactions" value="11"/>
</dbReference>
<dbReference type="IntAct" id="P46888">
    <property type="interactions" value="11"/>
</dbReference>
<dbReference type="STRING" id="511145.b1895"/>
<dbReference type="jPOST" id="P46888"/>
<dbReference type="PaxDb" id="511145-b1895"/>
<dbReference type="DNASU" id="946404"/>
<dbReference type="EnsemblBacteria" id="AAC74965">
    <property type="protein sequence ID" value="AAC74965"/>
    <property type="gene ID" value="b1895"/>
</dbReference>
<dbReference type="GeneID" id="946404"/>
<dbReference type="KEGG" id="ecj:JW1884"/>
<dbReference type="KEGG" id="eco:b1895"/>
<dbReference type="KEGG" id="ecoc:C3026_10765"/>
<dbReference type="PATRIC" id="fig|1411691.4.peg.354"/>
<dbReference type="EchoBASE" id="EB2704"/>
<dbReference type="eggNOG" id="COG0589">
    <property type="taxonomic scope" value="Bacteria"/>
</dbReference>
<dbReference type="HOGENOM" id="CLU_049301_18_1_6"/>
<dbReference type="InParanoid" id="P46888"/>
<dbReference type="OMA" id="CGNHNQS"/>
<dbReference type="OrthoDB" id="9792500at2"/>
<dbReference type="PhylomeDB" id="P46888"/>
<dbReference type="BioCyc" id="EcoCyc:G7031-MONOMER"/>
<dbReference type="PRO" id="PR:P46888"/>
<dbReference type="Proteomes" id="UP000000625">
    <property type="component" value="Chromosome"/>
</dbReference>
<dbReference type="GO" id="GO:0005737">
    <property type="term" value="C:cytoplasm"/>
    <property type="evidence" value="ECO:0007669"/>
    <property type="project" value="UniProtKB-SubCell"/>
</dbReference>
<dbReference type="GO" id="GO:0060090">
    <property type="term" value="F:molecular adaptor activity"/>
    <property type="evidence" value="ECO:0000314"/>
    <property type="project" value="EcoCyc"/>
</dbReference>
<dbReference type="GO" id="GO:0042803">
    <property type="term" value="F:protein homodimerization activity"/>
    <property type="evidence" value="ECO:0000314"/>
    <property type="project" value="EcoCyc"/>
</dbReference>
<dbReference type="GO" id="GO:0009267">
    <property type="term" value="P:cellular response to starvation"/>
    <property type="evidence" value="ECO:0000270"/>
    <property type="project" value="EcoCyc"/>
</dbReference>
<dbReference type="GO" id="GO:0034644">
    <property type="term" value="P:cellular response to UV"/>
    <property type="evidence" value="ECO:0000315"/>
    <property type="project" value="EcoCyc"/>
</dbReference>
<dbReference type="GO" id="GO:0009651">
    <property type="term" value="P:response to salt stress"/>
    <property type="evidence" value="ECO:0000315"/>
    <property type="project" value="CACAO"/>
</dbReference>
<dbReference type="GO" id="GO:0006950">
    <property type="term" value="P:response to stress"/>
    <property type="evidence" value="ECO:0000318"/>
    <property type="project" value="GO_Central"/>
</dbReference>
<dbReference type="CDD" id="cd23657">
    <property type="entry name" value="USP-A-like"/>
    <property type="match status" value="1"/>
</dbReference>
<dbReference type="Gene3D" id="3.40.50.620">
    <property type="entry name" value="HUPs"/>
    <property type="match status" value="1"/>
</dbReference>
<dbReference type="InterPro" id="IPR014729">
    <property type="entry name" value="Rossmann-like_a/b/a_fold"/>
</dbReference>
<dbReference type="InterPro" id="IPR006015">
    <property type="entry name" value="Universal_stress_UspA"/>
</dbReference>
<dbReference type="InterPro" id="IPR006016">
    <property type="entry name" value="UspA"/>
</dbReference>
<dbReference type="NCBIfam" id="NF007512">
    <property type="entry name" value="PRK10116.1"/>
    <property type="match status" value="1"/>
</dbReference>
<dbReference type="PANTHER" id="PTHR46268">
    <property type="entry name" value="STRESS RESPONSE PROTEIN NHAX"/>
    <property type="match status" value="1"/>
</dbReference>
<dbReference type="PANTHER" id="PTHR46268:SF16">
    <property type="entry name" value="UNIVERSAL STRESS PROTEIN C"/>
    <property type="match status" value="1"/>
</dbReference>
<dbReference type="Pfam" id="PF00582">
    <property type="entry name" value="Usp"/>
    <property type="match status" value="1"/>
</dbReference>
<dbReference type="PIRSF" id="PIRSF006276">
    <property type="entry name" value="UspA"/>
    <property type="match status" value="1"/>
</dbReference>
<dbReference type="SUPFAM" id="SSF52402">
    <property type="entry name" value="Adenine nucleotide alpha hydrolases-like"/>
    <property type="match status" value="1"/>
</dbReference>
<gene>
    <name type="primary">uspC</name>
    <name type="synonym">yecG</name>
    <name type="ordered locus">b1895</name>
    <name type="ordered locus">JW1884</name>
</gene>
<sequence>MSYSNILVAVAVTPESQQLLAKAVSIARPVKGHISLITLASDPEMYNQLAAPMLEDLRSVMHEETQSFLDKLIQDAGYPVDKTFIAYGELSEHILEVCHKHHFDLVICGNHNHSFFSRASCSAKRVIASSEVDVLLVPLTGD</sequence>
<comment type="function">
    <text evidence="2">Required for resistance to DNA-damaging agents.</text>
</comment>
<comment type="subcellular location">
    <subcellularLocation>
        <location evidence="1">Cytoplasm</location>
    </subcellularLocation>
</comment>
<comment type="induction">
    <text evidence="2">During growth inhibition caused by the exhaustion of any of a variety of nutrients (carbon, nitrogen, phosphate, sulfate, required amino acid) or by the presence of a variety of toxic agents. Positively regulated by guanosine 3',5'-bisphosphate (ppGpp) and by a RecA/FtsK-dependent regulatory pathway.</text>
</comment>
<comment type="similarity">
    <text evidence="3">Belongs to the universal stress protein A family.</text>
</comment>
<keyword id="KW-0963">Cytoplasm</keyword>
<keyword id="KW-1185">Reference proteome</keyword>
<organism>
    <name type="scientific">Escherichia coli (strain K12)</name>
    <dbReference type="NCBI Taxonomy" id="83333"/>
    <lineage>
        <taxon>Bacteria</taxon>
        <taxon>Pseudomonadati</taxon>
        <taxon>Pseudomonadota</taxon>
        <taxon>Gammaproteobacteria</taxon>
        <taxon>Enterobacterales</taxon>
        <taxon>Enterobacteriaceae</taxon>
        <taxon>Escherichia</taxon>
    </lineage>
</organism>
<feature type="chain" id="PRO_0000147408" description="Universal stress protein C">
    <location>
        <begin position="1"/>
        <end position="142"/>
    </location>
</feature>
<name>USPC_ECOLI</name>
<accession>P46888</accession>
<protein>
    <recommendedName>
        <fullName>Universal stress protein C</fullName>
    </recommendedName>
</protein>